<evidence type="ECO:0000250" key="1">
    <source>
        <dbReference type="UniProtKB" id="P68806"/>
    </source>
</evidence>
<evidence type="ECO:0000250" key="2">
    <source>
        <dbReference type="UniProtKB" id="P9WJN5"/>
    </source>
</evidence>
<evidence type="ECO:0000250" key="3">
    <source>
        <dbReference type="UniProtKB" id="Q6G9L1"/>
    </source>
</evidence>
<evidence type="ECO:0000255" key="4">
    <source>
        <dbReference type="HAMAP-Rule" id="MF_00115"/>
    </source>
</evidence>
<evidence type="ECO:0000269" key="5">
    <source>
    </source>
</evidence>
<evidence type="ECO:0000269" key="6">
    <source>
    </source>
</evidence>
<evidence type="ECO:0000305" key="7"/>
<evidence type="ECO:0000305" key="8">
    <source>
    </source>
</evidence>
<evidence type="ECO:0000305" key="9">
    <source>
    </source>
</evidence>
<keyword id="KW-1003">Cell membrane</keyword>
<keyword id="KW-0407">Ion channel</keyword>
<keyword id="KW-0406">Ion transport</keyword>
<keyword id="KW-0472">Membrane</keyword>
<keyword id="KW-1185">Reference proteome</keyword>
<keyword id="KW-0812">Transmembrane</keyword>
<keyword id="KW-1133">Transmembrane helix</keyword>
<keyword id="KW-0813">Transport</keyword>
<accession>P68805</accession>
<accession>O68285</accession>
<sequence length="120" mass="13616">MLKEFKEFALKGNVLDLAIAVVMGAAFNKIISSLVENIIMPLIGKIFGSVDFAKEWSFWGIKYGLFIQSVIDFIIIAFALFIFVKIANTLMKKEEAEEEAVVEENVVLLTEIRDLLREKK</sequence>
<comment type="function">
    <text evidence="5 6">Channel that opens in response to stretch forces in the membrane lipid bilayer. Forms a nonselective ion channel with a conductance of about 2.5-4 nanosiemens. May participate in the regulation of osmotic pressure changes within the cell.</text>
</comment>
<comment type="subunit">
    <text evidence="3 4">Homopentamer.</text>
</comment>
<comment type="subcellular location">
    <subcellularLocation>
        <location evidence="4 8 9">Cell membrane</location>
        <topology evidence="1 4">Multi-pass membrane protein</topology>
    </subcellularLocation>
</comment>
<comment type="domain">
    <text evidence="5">The extracellular loop between the two transmembrane domains modulates channel kinetics, and in particular the length of time the channel remains in the open conformation.</text>
</comment>
<comment type="similarity">
    <text evidence="4 7">Belongs to the MscL family.</text>
</comment>
<protein>
    <recommendedName>
        <fullName evidence="4">Large-conductance mechanosensitive channel</fullName>
    </recommendedName>
</protein>
<proteinExistence type="evidence at protein level"/>
<feature type="chain" id="PRO_0000192465" description="Large-conductance mechanosensitive channel">
    <location>
        <begin position="1"/>
        <end position="120"/>
    </location>
</feature>
<feature type="topological domain" description="Cytoplasmic" evidence="2">
    <location>
        <begin position="1"/>
        <end position="14"/>
    </location>
</feature>
<feature type="transmembrane region" description="Helical" evidence="2">
    <location>
        <begin position="15"/>
        <end position="43"/>
    </location>
</feature>
<feature type="topological domain" description="Extracellular" evidence="2">
    <location>
        <begin position="44"/>
        <end position="62"/>
    </location>
</feature>
<feature type="transmembrane region" description="Helical" evidence="2">
    <location>
        <begin position="63"/>
        <end position="82"/>
    </location>
</feature>
<feature type="topological domain" description="Cytoplasmic" evidence="2">
    <location>
        <begin position="83"/>
        <end position="120"/>
    </location>
</feature>
<feature type="mutagenesis site" description="Decreases the duration of the open state of the channel. Increases mechanosensitivity." evidence="5">
    <original>F</original>
    <variation>E</variation>
    <variation>K</variation>
    <location>
        <position position="47"/>
    </location>
</feature>
<feature type="mutagenesis site" description="Increases the duration of the open state of the channel." evidence="5">
    <original>F</original>
    <variation>I</variation>
    <variation>L</variation>
    <location>
        <position position="47"/>
    </location>
</feature>
<reference key="1">
    <citation type="journal article" date="1998" name="Mol. Microbiol.">
        <title>Functional and structural conservation in the mechanosensitive channel mscL implicates elements crucial for mechanosensation.</title>
        <authorList>
            <person name="Moe P.C."/>
            <person name="Blount P."/>
            <person name="Kung C."/>
        </authorList>
    </citation>
    <scope>NUCLEOTIDE SEQUENCE [GENOMIC DNA]</scope>
    <scope>FUNCTION</scope>
    <scope>SUBCELLULAR LOCATION</scope>
</reference>
<reference key="2">
    <citation type="book" date="2006" name="Gram positive pathogens, 2nd edition">
        <title>The Staphylococcus aureus NCTC 8325 genome.</title>
        <editorList>
            <person name="Fischetti V."/>
            <person name="Novick R."/>
            <person name="Ferretti J."/>
            <person name="Portnoy D."/>
            <person name="Rood J."/>
        </editorList>
        <authorList>
            <person name="Gillaspy A.F."/>
            <person name="Worrell V."/>
            <person name="Orvis J."/>
            <person name="Roe B.A."/>
            <person name="Dyer D.W."/>
            <person name="Iandolo J.J."/>
        </authorList>
    </citation>
    <scope>NUCLEOTIDE SEQUENCE [LARGE SCALE GENOMIC DNA]</scope>
    <source>
        <strain>NCTC 8325 / PS 47</strain>
    </source>
</reference>
<reference key="3">
    <citation type="journal article" date="2013" name="Cell Rep.">
        <title>Chimeras reveal a single lipid-interface residue that controls MscL channel kinetics as well as mechanosensitivity.</title>
        <authorList>
            <person name="Yang L.M."/>
            <person name="Zhong D."/>
            <person name="Blount P."/>
        </authorList>
    </citation>
    <scope>FUNCTION</scope>
    <scope>SUBCELLULAR LOCATION</scope>
    <scope>DOMAIN</scope>
    <scope>MUTAGENESIS OF PHE-47</scope>
</reference>
<organism>
    <name type="scientific">Staphylococcus aureus (strain NCTC 8325 / PS 47)</name>
    <dbReference type="NCBI Taxonomy" id="93061"/>
    <lineage>
        <taxon>Bacteria</taxon>
        <taxon>Bacillati</taxon>
        <taxon>Bacillota</taxon>
        <taxon>Bacilli</taxon>
        <taxon>Bacillales</taxon>
        <taxon>Staphylococcaceae</taxon>
        <taxon>Staphylococcus</taxon>
    </lineage>
</organism>
<gene>
    <name evidence="4" type="primary">mscL</name>
    <name type="ordered locus">SAOUHSC_01345</name>
</gene>
<dbReference type="EMBL" id="AF029731">
    <property type="protein sequence ID" value="AAC38560.1"/>
    <property type="molecule type" value="Genomic_DNA"/>
</dbReference>
<dbReference type="EMBL" id="CP000253">
    <property type="status" value="NOT_ANNOTATED_CDS"/>
    <property type="molecule type" value="Genomic_DNA"/>
</dbReference>
<dbReference type="RefSeq" id="WP_000910489.1">
    <property type="nucleotide sequence ID" value="NZ_LS483365.1"/>
</dbReference>
<dbReference type="RefSeq" id="YP_008530241.1">
    <property type="nucleotide sequence ID" value="NC_007795.1"/>
</dbReference>
<dbReference type="SMR" id="P68805"/>
<dbReference type="TCDB" id="1.A.22.1.5">
    <property type="family name" value="the large conductance mechanosensitive ion channel (mscl) family"/>
</dbReference>
<dbReference type="PaxDb" id="1280-SAXN108_1364"/>
<dbReference type="KEGG" id="sao:SAOUHSC_1342a"/>
<dbReference type="eggNOG" id="COG1970">
    <property type="taxonomic scope" value="Bacteria"/>
</dbReference>
<dbReference type="OrthoDB" id="9810350at2"/>
<dbReference type="PRO" id="PR:P68805"/>
<dbReference type="Proteomes" id="UP000008816">
    <property type="component" value="Chromosome"/>
</dbReference>
<dbReference type="GO" id="GO:0016020">
    <property type="term" value="C:membrane"/>
    <property type="evidence" value="ECO:0000318"/>
    <property type="project" value="GO_Central"/>
</dbReference>
<dbReference type="GO" id="GO:0005886">
    <property type="term" value="C:plasma membrane"/>
    <property type="evidence" value="ECO:0007669"/>
    <property type="project" value="UniProtKB-SubCell"/>
</dbReference>
<dbReference type="GO" id="GO:0008381">
    <property type="term" value="F:mechanosensitive monoatomic ion channel activity"/>
    <property type="evidence" value="ECO:0000318"/>
    <property type="project" value="GO_Central"/>
</dbReference>
<dbReference type="GO" id="GO:0006811">
    <property type="term" value="P:monoatomic ion transport"/>
    <property type="evidence" value="ECO:0000318"/>
    <property type="project" value="GO_Central"/>
</dbReference>
<dbReference type="FunFam" id="1.10.1200.120:FF:000002">
    <property type="entry name" value="Large-conductance mechanosensitive channel"/>
    <property type="match status" value="1"/>
</dbReference>
<dbReference type="Gene3D" id="1.10.1200.120">
    <property type="entry name" value="Large-conductance mechanosensitive channel, MscL, domain 1"/>
    <property type="match status" value="1"/>
</dbReference>
<dbReference type="HAMAP" id="MF_00115">
    <property type="entry name" value="MscL"/>
    <property type="match status" value="1"/>
</dbReference>
<dbReference type="InterPro" id="IPR019823">
    <property type="entry name" value="Mechanosensitive_channel_CS"/>
</dbReference>
<dbReference type="InterPro" id="IPR001185">
    <property type="entry name" value="MS_channel"/>
</dbReference>
<dbReference type="InterPro" id="IPR037673">
    <property type="entry name" value="MSC/AndL"/>
</dbReference>
<dbReference type="InterPro" id="IPR036019">
    <property type="entry name" value="MscL_channel"/>
</dbReference>
<dbReference type="NCBIfam" id="TIGR00220">
    <property type="entry name" value="mscL"/>
    <property type="match status" value="1"/>
</dbReference>
<dbReference type="NCBIfam" id="NF010559">
    <property type="entry name" value="PRK13954.1"/>
    <property type="match status" value="1"/>
</dbReference>
<dbReference type="PANTHER" id="PTHR30266:SF2">
    <property type="entry name" value="LARGE-CONDUCTANCE MECHANOSENSITIVE CHANNEL"/>
    <property type="match status" value="1"/>
</dbReference>
<dbReference type="PANTHER" id="PTHR30266">
    <property type="entry name" value="MECHANOSENSITIVE CHANNEL MSCL"/>
    <property type="match status" value="1"/>
</dbReference>
<dbReference type="Pfam" id="PF01741">
    <property type="entry name" value="MscL"/>
    <property type="match status" value="1"/>
</dbReference>
<dbReference type="PRINTS" id="PR01264">
    <property type="entry name" value="MECHCHANNEL"/>
</dbReference>
<dbReference type="SUPFAM" id="SSF81330">
    <property type="entry name" value="Gated mechanosensitive channel"/>
    <property type="match status" value="1"/>
</dbReference>
<dbReference type="PROSITE" id="PS01327">
    <property type="entry name" value="MSCL"/>
    <property type="match status" value="1"/>
</dbReference>
<name>MSCL_STAA8</name>